<name>CLE40_ARATH</name>
<evidence type="ECO:0000250" key="1">
    <source>
        <dbReference type="UniProtKB" id="O49519"/>
    </source>
</evidence>
<evidence type="ECO:0000255" key="2"/>
<evidence type="ECO:0000256" key="3">
    <source>
        <dbReference type="SAM" id="MobiDB-lite"/>
    </source>
</evidence>
<evidence type="ECO:0000269" key="4">
    <source>
    </source>
</evidence>
<evidence type="ECO:0000269" key="5">
    <source>
    </source>
</evidence>
<evidence type="ECO:0000269" key="6">
    <source>
    </source>
</evidence>
<evidence type="ECO:0000269" key="7">
    <source>
    </source>
</evidence>
<evidence type="ECO:0000269" key="8">
    <source>
    </source>
</evidence>
<evidence type="ECO:0000269" key="9">
    <source>
    </source>
</evidence>
<evidence type="ECO:0000269" key="10">
    <source>
    </source>
</evidence>
<evidence type="ECO:0000303" key="11">
    <source>
    </source>
</evidence>
<evidence type="ECO:0000305" key="12"/>
<evidence type="ECO:0000312" key="13">
    <source>
        <dbReference type="Araport" id="AT5G12990"/>
    </source>
</evidence>
<evidence type="ECO:0000312" key="14">
    <source>
        <dbReference type="EMBL" id="CAB88263.1"/>
    </source>
</evidence>
<reference key="1">
    <citation type="journal article" date="2003" name="Plant Mol. Biol.">
        <title>The Arabidopsis CLV3-like (CLE) genes are expressed in diverse tissues and encode secreted proteins.</title>
        <authorList>
            <person name="Sharma V.K."/>
            <person name="Ramirez J."/>
            <person name="Fletcher J.C."/>
        </authorList>
    </citation>
    <scope>NUCLEOTIDE SEQUENCE [MRNA]</scope>
    <scope>SUBCELLULAR LOCATION</scope>
</reference>
<reference key="2">
    <citation type="journal article" date="2000" name="Nature">
        <title>Sequence and analysis of chromosome 5 of the plant Arabidopsis thaliana.</title>
        <authorList>
            <person name="Tabata S."/>
            <person name="Kaneko T."/>
            <person name="Nakamura Y."/>
            <person name="Kotani H."/>
            <person name="Kato T."/>
            <person name="Asamizu E."/>
            <person name="Miyajima N."/>
            <person name="Sasamoto S."/>
            <person name="Kimura T."/>
            <person name="Hosouchi T."/>
            <person name="Kawashima K."/>
            <person name="Kohara M."/>
            <person name="Matsumoto M."/>
            <person name="Matsuno A."/>
            <person name="Muraki A."/>
            <person name="Nakayama S."/>
            <person name="Nakazaki N."/>
            <person name="Naruo K."/>
            <person name="Okumura S."/>
            <person name="Shinpo S."/>
            <person name="Takeuchi C."/>
            <person name="Wada T."/>
            <person name="Watanabe A."/>
            <person name="Yamada M."/>
            <person name="Yasuda M."/>
            <person name="Sato S."/>
            <person name="de la Bastide M."/>
            <person name="Huang E."/>
            <person name="Spiegel L."/>
            <person name="Gnoj L."/>
            <person name="O'Shaughnessy A."/>
            <person name="Preston R."/>
            <person name="Habermann K."/>
            <person name="Murray J."/>
            <person name="Johnson D."/>
            <person name="Rohlfing T."/>
            <person name="Nelson J."/>
            <person name="Stoneking T."/>
            <person name="Pepin K."/>
            <person name="Spieth J."/>
            <person name="Sekhon M."/>
            <person name="Armstrong J."/>
            <person name="Becker M."/>
            <person name="Belter E."/>
            <person name="Cordum H."/>
            <person name="Cordes M."/>
            <person name="Courtney L."/>
            <person name="Courtney W."/>
            <person name="Dante M."/>
            <person name="Du H."/>
            <person name="Edwards J."/>
            <person name="Fryman J."/>
            <person name="Haakensen B."/>
            <person name="Lamar E."/>
            <person name="Latreille P."/>
            <person name="Leonard S."/>
            <person name="Meyer R."/>
            <person name="Mulvaney E."/>
            <person name="Ozersky P."/>
            <person name="Riley A."/>
            <person name="Strowmatt C."/>
            <person name="Wagner-McPherson C."/>
            <person name="Wollam A."/>
            <person name="Yoakum M."/>
            <person name="Bell M."/>
            <person name="Dedhia N."/>
            <person name="Parnell L."/>
            <person name="Shah R."/>
            <person name="Rodriguez M."/>
            <person name="Hoon See L."/>
            <person name="Vil D."/>
            <person name="Baker J."/>
            <person name="Kirchoff K."/>
            <person name="Toth K."/>
            <person name="King L."/>
            <person name="Bahret A."/>
            <person name="Miller B."/>
            <person name="Marra M.A."/>
            <person name="Martienssen R."/>
            <person name="McCombie W.R."/>
            <person name="Wilson R.K."/>
            <person name="Murphy G."/>
            <person name="Bancroft I."/>
            <person name="Volckaert G."/>
            <person name="Wambutt R."/>
            <person name="Duesterhoeft A."/>
            <person name="Stiekema W."/>
            <person name="Pohl T."/>
            <person name="Entian K.-D."/>
            <person name="Terryn N."/>
            <person name="Hartley N."/>
            <person name="Bent E."/>
            <person name="Johnson S."/>
            <person name="Langham S.-A."/>
            <person name="McCullagh B."/>
            <person name="Robben J."/>
            <person name="Grymonprez B."/>
            <person name="Zimmermann W."/>
            <person name="Ramsperger U."/>
            <person name="Wedler H."/>
            <person name="Balke K."/>
            <person name="Wedler E."/>
            <person name="Peters S."/>
            <person name="van Staveren M."/>
            <person name="Dirkse W."/>
            <person name="Mooijman P."/>
            <person name="Klein Lankhorst R."/>
            <person name="Weitzenegger T."/>
            <person name="Bothe G."/>
            <person name="Rose M."/>
            <person name="Hauf J."/>
            <person name="Berneiser S."/>
            <person name="Hempel S."/>
            <person name="Feldpausch M."/>
            <person name="Lamberth S."/>
            <person name="Villarroel R."/>
            <person name="Gielen J."/>
            <person name="Ardiles W."/>
            <person name="Bents O."/>
            <person name="Lemcke K."/>
            <person name="Kolesov G."/>
            <person name="Mayer K.F.X."/>
            <person name="Rudd S."/>
            <person name="Schoof H."/>
            <person name="Schueller C."/>
            <person name="Zaccaria P."/>
            <person name="Mewes H.-W."/>
            <person name="Bevan M."/>
            <person name="Fransz P.F."/>
        </authorList>
    </citation>
    <scope>NUCLEOTIDE SEQUENCE [LARGE SCALE GENOMIC DNA]</scope>
    <source>
        <strain>cv. Columbia</strain>
    </source>
</reference>
<reference key="3">
    <citation type="journal article" date="2017" name="Plant J.">
        <title>Araport11: a complete reannotation of the Arabidopsis thaliana reference genome.</title>
        <authorList>
            <person name="Cheng C.Y."/>
            <person name="Krishnakumar V."/>
            <person name="Chan A.P."/>
            <person name="Thibaud-Nissen F."/>
            <person name="Schobel S."/>
            <person name="Town C.D."/>
        </authorList>
    </citation>
    <scope>GENOME REANNOTATION</scope>
    <source>
        <strain>cv. Columbia</strain>
    </source>
</reference>
<reference key="4">
    <citation type="journal article" date="2001" name="Plant Physiol.">
        <title>A large family of genes that share homology with CLAVATA3.</title>
        <authorList>
            <person name="Cock J.M."/>
            <person name="McCormick S."/>
        </authorList>
    </citation>
    <scope>GENE FAMILY</scope>
    <scope>NOMENCLATURE</scope>
</reference>
<reference key="5">
    <citation type="journal article" date="2003" name="Dev. Genes Evol.">
        <title>Loss of CLE40, a protein functionally equivalent to the stem cell restricting signal CLV3, enhances root waving in Arabidopsis.</title>
        <authorList>
            <person name="Hobe M."/>
            <person name="Mueller R."/>
            <person name="Gruenewald M."/>
            <person name="Brand U."/>
            <person name="Simon R."/>
        </authorList>
    </citation>
    <scope>FUNCTION</scope>
    <scope>TISSUE SPECIFICITY</scope>
    <scope>DISRUPTION PHENOTYPE</scope>
</reference>
<reference key="6">
    <citation type="journal article" date="2005" name="Plant Cell">
        <title>The 14-amino acid CLV3, CLE19, and CLE40 peptides trigger consumption of the root meristem in Arabidopsis through a CLAVATA2-dependent pathway.</title>
        <authorList>
            <person name="Fiers M."/>
            <person name="Golemiec E."/>
            <person name="Xu J."/>
            <person name="van der Geest L."/>
            <person name="Heidstra R."/>
            <person name="Stiekema W."/>
            <person name="Liu C.-M."/>
        </authorList>
    </citation>
    <scope>FUNCTION</scope>
</reference>
<reference key="7">
    <citation type="journal article" date="2006" name="Plant Physiol.">
        <title>Gain-of-function phenotypes of many CLAVATA3/ESR genes, including four new family members, correlate with tandem variations in the conserved CLAVATA3/ESR domain.</title>
        <authorList>
            <person name="Strabala T.J."/>
            <person name="O'donnell P.J."/>
            <person name="Smit A.-M."/>
            <person name="Ampomah-Dwamena C."/>
            <person name="Martin E.J."/>
            <person name="Netzler N."/>
            <person name="Nieuwenhuizen N.J."/>
            <person name="Quinn B.D."/>
            <person name="Foote H.C.C."/>
            <person name="Hudson K.R."/>
        </authorList>
    </citation>
    <scope>GENE FAMILY</scope>
</reference>
<reference key="8">
    <citation type="journal article" date="2006" name="Science">
        <title>Dodeca-CLE peptides as suppressors of plant stem cell differentiation.</title>
        <authorList>
            <person name="Ito Y."/>
            <person name="Nakanomyo I."/>
            <person name="Motose H."/>
            <person name="Iwamoto K."/>
            <person name="Sawa S."/>
            <person name="Dohmae N."/>
            <person name="Fukuda H."/>
        </authorList>
    </citation>
    <scope>FUNCTION</scope>
</reference>
<reference key="9">
    <citation type="journal article" date="2008" name="Cell. Mol. Life Sci.">
        <title>The CLE family of plant polypeptide signaling molecules.</title>
        <authorList>
            <person name="Jun J.H."/>
            <person name="Fiume E."/>
            <person name="Fletcher J.C."/>
        </authorList>
    </citation>
    <scope>REVIEW</scope>
</reference>
<reference key="10">
    <citation type="journal article" date="2008" name="Curr. Opin. Plant Biol.">
        <title>Diverse and conserved roles of CLE peptides.</title>
        <authorList>
            <person name="Mitchum M.G."/>
            <person name="Wang X."/>
            <person name="Davis E.L."/>
        </authorList>
    </citation>
    <scope>REVIEW</scope>
</reference>
<reference key="11">
    <citation type="journal article" date="2009" name="Curr. Biol.">
        <title>A signaling module controlling the stem cell niche in Arabidopsis root meristems.</title>
        <authorList>
            <person name="Stahl Y."/>
            <person name="Wink R.H."/>
            <person name="Ingram G.C."/>
            <person name="Simon R."/>
        </authorList>
    </citation>
    <scope>FUNCTION</scope>
    <scope>TISSUE SPECIFICITY</scope>
    <scope>DEVELOPMENTAL STAGE</scope>
    <scope>DISRUPTION PHENOTYPE</scope>
</reference>
<reference key="12">
    <citation type="journal article" date="2009" name="Plant Signal. Behav.">
        <title>Is the Arabidopsis root niche protected by sequestration of the CLE40 signal by its putative receptor ACR4.</title>
        <authorList>
            <person name="Stahl Y."/>
            <person name="Simon R."/>
        </authorList>
    </citation>
    <scope>FUNCTION</scope>
    <scope>TISSUE SPECIFICITY</scope>
    <scope>DEVELOPMENTAL STAGE</scope>
    <scope>DISRUPTION PHENOTYPE</scope>
</reference>
<reference key="13">
    <citation type="journal article" date="2010" name="Protoplasma">
        <title>CLE peptide signaling during plant development.</title>
        <authorList>
            <person name="Wang G."/>
            <person name="Fiers M."/>
        </authorList>
    </citation>
    <scope>REVIEW</scope>
</reference>
<reference key="14">
    <citation type="journal article" date="2017" name="EMBO Rep.">
        <title>Perception of root-active CLE peptides requires CORYNE function in the phloem vasculature.</title>
        <authorList>
            <person name="Hazak O."/>
            <person name="Brandt B."/>
            <person name="Cattaneo P."/>
            <person name="Santiago J."/>
            <person name="Rodriguez-Villalon A."/>
            <person name="Hothorn M."/>
            <person name="Hardtke C.S."/>
        </authorList>
    </citation>
    <scope>FUNCTION</scope>
    <source>
        <strain>cv. Columbia</strain>
    </source>
</reference>
<proteinExistence type="evidence at transcript level"/>
<accession>Q9LXU0</accession>
<keyword id="KW-0217">Developmental protein</keyword>
<keyword id="KW-0221">Differentiation</keyword>
<keyword id="KW-0379">Hydroxylation</keyword>
<keyword id="KW-1185">Reference proteome</keyword>
<keyword id="KW-0964">Secreted</keyword>
<keyword id="KW-0732">Signal</keyword>
<feature type="signal peptide" evidence="2">
    <location>
        <begin position="1"/>
        <end position="25"/>
    </location>
</feature>
<feature type="chain" id="PRO_0000401281" description="CLAVATA3/ESR (CLE)-related protein 40">
    <location>
        <begin position="26"/>
        <end position="80"/>
    </location>
</feature>
<feature type="peptide" id="PRO_0000401282" description="CLE40p" evidence="1">
    <location>
        <begin position="62"/>
        <end position="73"/>
    </location>
</feature>
<feature type="region of interest" description="Disordered" evidence="3">
    <location>
        <begin position="45"/>
        <end position="80"/>
    </location>
</feature>
<feature type="modified residue" description="Hydroxyproline" evidence="1">
    <location>
        <position position="65"/>
    </location>
</feature>
<sequence length="80" mass="8856">MAAMKYKGSVFIILVILLLSSSLLAHSSSTKSFFWLGETQDTKAMKKEKKIDGGTANEVEERQVPTGSDPLHHKHIPFTP</sequence>
<gene>
    <name evidence="11" type="primary">CLE40</name>
    <name evidence="13" type="ordered locus">At5g12990</name>
    <name evidence="14" type="ORF">T24H18.160</name>
</gene>
<dbReference type="EMBL" id="AL353013">
    <property type="protein sequence ID" value="CAB88263.1"/>
    <property type="molecule type" value="Genomic_DNA"/>
</dbReference>
<dbReference type="EMBL" id="CP002688">
    <property type="protein sequence ID" value="AED91838.1"/>
    <property type="molecule type" value="Genomic_DNA"/>
</dbReference>
<dbReference type="PIR" id="T49913">
    <property type="entry name" value="T49913"/>
</dbReference>
<dbReference type="RefSeq" id="NP_196803.1">
    <property type="nucleotide sequence ID" value="NM_121302.2"/>
</dbReference>
<dbReference type="SMR" id="Q9LXU0"/>
<dbReference type="STRING" id="3702.Q9LXU0"/>
<dbReference type="PaxDb" id="3702-AT5G12990.1"/>
<dbReference type="EnsemblPlants" id="AT5G12990.1">
    <property type="protein sequence ID" value="AT5G12990.1"/>
    <property type="gene ID" value="AT5G12990"/>
</dbReference>
<dbReference type="GeneID" id="831139"/>
<dbReference type="Gramene" id="AT5G12990.1">
    <property type="protein sequence ID" value="AT5G12990.1"/>
    <property type="gene ID" value="AT5G12990"/>
</dbReference>
<dbReference type="KEGG" id="ath:AT5G12990"/>
<dbReference type="Araport" id="AT5G12990"/>
<dbReference type="TAIR" id="AT5G12990">
    <property type="gene designation" value="CLE40"/>
</dbReference>
<dbReference type="HOGENOM" id="CLU_2530591_0_0_1"/>
<dbReference type="InParanoid" id="Q9LXU0"/>
<dbReference type="OMA" id="FWLGETQ"/>
<dbReference type="OrthoDB" id="1097525at2759"/>
<dbReference type="PRO" id="PR:Q9LXU0"/>
<dbReference type="Proteomes" id="UP000006548">
    <property type="component" value="Chromosome 5"/>
</dbReference>
<dbReference type="ExpressionAtlas" id="Q9LXU0">
    <property type="expression patterns" value="baseline and differential"/>
</dbReference>
<dbReference type="GO" id="GO:0048046">
    <property type="term" value="C:apoplast"/>
    <property type="evidence" value="ECO:0000255"/>
    <property type="project" value="TAIR"/>
</dbReference>
<dbReference type="GO" id="GO:0033612">
    <property type="term" value="F:receptor serine/threonine kinase binding"/>
    <property type="evidence" value="ECO:0000353"/>
    <property type="project" value="UniProtKB"/>
</dbReference>
<dbReference type="GO" id="GO:0001708">
    <property type="term" value="P:cell fate specification"/>
    <property type="evidence" value="ECO:0000315"/>
    <property type="project" value="TAIR"/>
</dbReference>
<dbReference type="GO" id="GO:0045168">
    <property type="term" value="P:cell-cell signaling involved in cell fate commitment"/>
    <property type="evidence" value="ECO:0000250"/>
    <property type="project" value="UniProtKB"/>
</dbReference>
<dbReference type="GO" id="GO:0010078">
    <property type="term" value="P:maintenance of root meristem identity"/>
    <property type="evidence" value="ECO:0000314"/>
    <property type="project" value="UniProtKB"/>
</dbReference>
<dbReference type="GO" id="GO:0010088">
    <property type="term" value="P:phloem development"/>
    <property type="evidence" value="ECO:0000314"/>
    <property type="project" value="UniProtKB"/>
</dbReference>
<dbReference type="GO" id="GO:0045595">
    <property type="term" value="P:regulation of cell differentiation"/>
    <property type="evidence" value="ECO:0000314"/>
    <property type="project" value="UniProtKB"/>
</dbReference>
<organism>
    <name type="scientific">Arabidopsis thaliana</name>
    <name type="common">Mouse-ear cress</name>
    <dbReference type="NCBI Taxonomy" id="3702"/>
    <lineage>
        <taxon>Eukaryota</taxon>
        <taxon>Viridiplantae</taxon>
        <taxon>Streptophyta</taxon>
        <taxon>Embryophyta</taxon>
        <taxon>Tracheophyta</taxon>
        <taxon>Spermatophyta</taxon>
        <taxon>Magnoliopsida</taxon>
        <taxon>eudicotyledons</taxon>
        <taxon>Gunneridae</taxon>
        <taxon>Pentapetalae</taxon>
        <taxon>rosids</taxon>
        <taxon>malvids</taxon>
        <taxon>Brassicales</taxon>
        <taxon>Brassicaceae</taxon>
        <taxon>Camelineae</taxon>
        <taxon>Arabidopsis</taxon>
    </lineage>
</organism>
<comment type="function">
    <molecule>CLE40p</molecule>
    <text evidence="5 6 7 8 9 10">Extracellular signal peptide secreted by differentiated root cells that regulates root cell fate. Acts with ACR4 as a ligand-receptor pair in a signal transduction pathway, coordinating movement of the root tip and organization of cell divisions in the root meristem. Promotes cell differentiation in the distal root meristem in a dose-dependent manner, especially the transition from columella stem cells (CSC) daughters into columella cells (CCs). Induces ACR4 expression in root quiescent center (QC). Involved in WUX5 QC-specific expression pattern regulation. Regulates the transition of protophloem cells from proliferation to differentiation, thus impinging on postembryonic growth capacity of the root meristem; this signaling pathway requires CRN and CLV2 (PubMed:28607033).</text>
</comment>
<comment type="subcellular location">
    <molecule>CLE40p</molecule>
    <subcellularLocation>
        <location evidence="4">Secreted</location>
        <location evidence="4">Extracellular space</location>
    </subcellularLocation>
</comment>
<comment type="tissue specificity">
    <molecule>CLE40p</molecule>
    <text evidence="5 8 9">Mostly expressed at low levels in stems and apex, and, to a lower extent, in roots, seedlings, leaves, flowers, siliques and pollen.</text>
</comment>
<comment type="developmental stage">
    <molecule>CLE40p</molecule>
    <text evidence="8 9">Expressed in the entire embryo at the globular stage. Progressively restricted to the basal regions of the embryo that form the root meristem and the vasculature. After germination, detected in the differentiation zone of the stele that forms the inner layers of the root and in differentiating columella cells (CCs).</text>
</comment>
<comment type="disruption phenotype">
    <molecule>CLE40p</molecule>
    <text evidence="5 8 9">Short roots with irregularly shaped root tips and following a waving pattern. Delayed differentiation of columella stem cells (CSC) daughters into columella cells (CCs).</text>
</comment>
<comment type="similarity">
    <text evidence="12">Belongs to the CLV3/ESR signal peptide family.</text>
</comment>
<protein>
    <recommendedName>
        <fullName evidence="11">CLAVATA3/ESR (CLE)-related protein 40</fullName>
    </recommendedName>
    <component>
        <recommendedName>
            <fullName evidence="11">CLE40p</fullName>
        </recommendedName>
    </component>
</protein>